<proteinExistence type="inferred from homology"/>
<dbReference type="EC" id="6.1.1.11" evidence="1"/>
<dbReference type="EMBL" id="FM180568">
    <property type="protein sequence ID" value="CAS08437.1"/>
    <property type="molecule type" value="Genomic_DNA"/>
</dbReference>
<dbReference type="RefSeq" id="WP_000886683.1">
    <property type="nucleotide sequence ID" value="NC_011601.1"/>
</dbReference>
<dbReference type="SMR" id="B7UMY4"/>
<dbReference type="GeneID" id="93776527"/>
<dbReference type="KEGG" id="ecg:E2348C_0889"/>
<dbReference type="HOGENOM" id="CLU_023797_1_1_6"/>
<dbReference type="UniPathway" id="UPA00906">
    <property type="reaction ID" value="UER00895"/>
</dbReference>
<dbReference type="Proteomes" id="UP000008205">
    <property type="component" value="Chromosome"/>
</dbReference>
<dbReference type="GO" id="GO:0005737">
    <property type="term" value="C:cytoplasm"/>
    <property type="evidence" value="ECO:0007669"/>
    <property type="project" value="UniProtKB-SubCell"/>
</dbReference>
<dbReference type="GO" id="GO:0005524">
    <property type="term" value="F:ATP binding"/>
    <property type="evidence" value="ECO:0007669"/>
    <property type="project" value="UniProtKB-UniRule"/>
</dbReference>
<dbReference type="GO" id="GO:0004828">
    <property type="term" value="F:serine-tRNA ligase activity"/>
    <property type="evidence" value="ECO:0007669"/>
    <property type="project" value="UniProtKB-UniRule"/>
</dbReference>
<dbReference type="GO" id="GO:0016260">
    <property type="term" value="P:selenocysteine biosynthetic process"/>
    <property type="evidence" value="ECO:0007669"/>
    <property type="project" value="UniProtKB-UniRule"/>
</dbReference>
<dbReference type="GO" id="GO:0006434">
    <property type="term" value="P:seryl-tRNA aminoacylation"/>
    <property type="evidence" value="ECO:0007669"/>
    <property type="project" value="UniProtKB-UniRule"/>
</dbReference>
<dbReference type="CDD" id="cd00770">
    <property type="entry name" value="SerRS_core"/>
    <property type="match status" value="1"/>
</dbReference>
<dbReference type="FunFam" id="1.10.287.40:FF:000001">
    <property type="entry name" value="Serine--tRNA ligase"/>
    <property type="match status" value="1"/>
</dbReference>
<dbReference type="FunFam" id="3.30.930.10:FF:000018">
    <property type="entry name" value="Serine--tRNA ligase"/>
    <property type="match status" value="1"/>
</dbReference>
<dbReference type="Gene3D" id="3.30.930.10">
    <property type="entry name" value="Bira Bifunctional Protein, Domain 2"/>
    <property type="match status" value="1"/>
</dbReference>
<dbReference type="Gene3D" id="1.10.287.40">
    <property type="entry name" value="Serine-tRNA synthetase, tRNA binding domain"/>
    <property type="match status" value="1"/>
</dbReference>
<dbReference type="HAMAP" id="MF_00176">
    <property type="entry name" value="Ser_tRNA_synth_type1"/>
    <property type="match status" value="1"/>
</dbReference>
<dbReference type="InterPro" id="IPR002314">
    <property type="entry name" value="aa-tRNA-synt_IIb"/>
</dbReference>
<dbReference type="InterPro" id="IPR006195">
    <property type="entry name" value="aa-tRNA-synth_II"/>
</dbReference>
<dbReference type="InterPro" id="IPR045864">
    <property type="entry name" value="aa-tRNA-synth_II/BPL/LPL"/>
</dbReference>
<dbReference type="InterPro" id="IPR002317">
    <property type="entry name" value="Ser-tRNA-ligase_type_1"/>
</dbReference>
<dbReference type="InterPro" id="IPR015866">
    <property type="entry name" value="Ser-tRNA-synth_1_N"/>
</dbReference>
<dbReference type="InterPro" id="IPR042103">
    <property type="entry name" value="SerRS_1_N_sf"/>
</dbReference>
<dbReference type="InterPro" id="IPR033729">
    <property type="entry name" value="SerRS_core"/>
</dbReference>
<dbReference type="InterPro" id="IPR010978">
    <property type="entry name" value="tRNA-bd_arm"/>
</dbReference>
<dbReference type="NCBIfam" id="TIGR00414">
    <property type="entry name" value="serS"/>
    <property type="match status" value="1"/>
</dbReference>
<dbReference type="PANTHER" id="PTHR43697:SF1">
    <property type="entry name" value="SERINE--TRNA LIGASE"/>
    <property type="match status" value="1"/>
</dbReference>
<dbReference type="PANTHER" id="PTHR43697">
    <property type="entry name" value="SERYL-TRNA SYNTHETASE"/>
    <property type="match status" value="1"/>
</dbReference>
<dbReference type="Pfam" id="PF02403">
    <property type="entry name" value="Seryl_tRNA_N"/>
    <property type="match status" value="1"/>
</dbReference>
<dbReference type="Pfam" id="PF00587">
    <property type="entry name" value="tRNA-synt_2b"/>
    <property type="match status" value="1"/>
</dbReference>
<dbReference type="PIRSF" id="PIRSF001529">
    <property type="entry name" value="Ser-tRNA-synth_IIa"/>
    <property type="match status" value="1"/>
</dbReference>
<dbReference type="PRINTS" id="PR00981">
    <property type="entry name" value="TRNASYNTHSER"/>
</dbReference>
<dbReference type="SUPFAM" id="SSF55681">
    <property type="entry name" value="Class II aaRS and biotin synthetases"/>
    <property type="match status" value="1"/>
</dbReference>
<dbReference type="SUPFAM" id="SSF46589">
    <property type="entry name" value="tRNA-binding arm"/>
    <property type="match status" value="1"/>
</dbReference>
<dbReference type="PROSITE" id="PS50862">
    <property type="entry name" value="AA_TRNA_LIGASE_II"/>
    <property type="match status" value="1"/>
</dbReference>
<accession>B7UMY4</accession>
<feature type="chain" id="PRO_1000199478" description="Serine--tRNA ligase">
    <location>
        <begin position="1"/>
        <end position="430"/>
    </location>
</feature>
<feature type="binding site" evidence="1">
    <location>
        <begin position="237"/>
        <end position="239"/>
    </location>
    <ligand>
        <name>L-serine</name>
        <dbReference type="ChEBI" id="CHEBI:33384"/>
    </ligand>
</feature>
<feature type="binding site" evidence="1">
    <location>
        <begin position="268"/>
        <end position="270"/>
    </location>
    <ligand>
        <name>ATP</name>
        <dbReference type="ChEBI" id="CHEBI:30616"/>
    </ligand>
</feature>
<feature type="binding site" evidence="1">
    <location>
        <position position="291"/>
    </location>
    <ligand>
        <name>L-serine</name>
        <dbReference type="ChEBI" id="CHEBI:33384"/>
    </ligand>
</feature>
<feature type="binding site" evidence="1">
    <location>
        <begin position="355"/>
        <end position="358"/>
    </location>
    <ligand>
        <name>ATP</name>
        <dbReference type="ChEBI" id="CHEBI:30616"/>
    </ligand>
</feature>
<feature type="binding site" evidence="1">
    <location>
        <position position="391"/>
    </location>
    <ligand>
        <name>L-serine</name>
        <dbReference type="ChEBI" id="CHEBI:33384"/>
    </ligand>
</feature>
<reference key="1">
    <citation type="journal article" date="2009" name="J. Bacteriol.">
        <title>Complete genome sequence and comparative genome analysis of enteropathogenic Escherichia coli O127:H6 strain E2348/69.</title>
        <authorList>
            <person name="Iguchi A."/>
            <person name="Thomson N.R."/>
            <person name="Ogura Y."/>
            <person name="Saunders D."/>
            <person name="Ooka T."/>
            <person name="Henderson I.R."/>
            <person name="Harris D."/>
            <person name="Asadulghani M."/>
            <person name="Kurokawa K."/>
            <person name="Dean P."/>
            <person name="Kenny B."/>
            <person name="Quail M.A."/>
            <person name="Thurston S."/>
            <person name="Dougan G."/>
            <person name="Hayashi T."/>
            <person name="Parkhill J."/>
            <person name="Frankel G."/>
        </authorList>
    </citation>
    <scope>NUCLEOTIDE SEQUENCE [LARGE SCALE GENOMIC DNA]</scope>
    <source>
        <strain>E2348/69 / EPEC</strain>
    </source>
</reference>
<organism>
    <name type="scientific">Escherichia coli O127:H6 (strain E2348/69 / EPEC)</name>
    <dbReference type="NCBI Taxonomy" id="574521"/>
    <lineage>
        <taxon>Bacteria</taxon>
        <taxon>Pseudomonadati</taxon>
        <taxon>Pseudomonadota</taxon>
        <taxon>Gammaproteobacteria</taxon>
        <taxon>Enterobacterales</taxon>
        <taxon>Enterobacteriaceae</taxon>
        <taxon>Escherichia</taxon>
    </lineage>
</organism>
<gene>
    <name evidence="1" type="primary">serS</name>
    <name type="ordered locus">E2348C_0889</name>
</gene>
<sequence length="430" mass="48414">MLDPNLLRNEPDAVAEKLARRGFKLDVDKLGALEERRKVLQVKTENLQAERNSRSKSIGQAKARGEDIEPLRLEVNKLGEELDAAKAELDALQAEIRDIALTIPNLPADEVPVGKDENDNVEVSRWGTPREFDFEVRDHVTLGEMHSGLDFAAAVKLTGSRFVVMKGQIARMHRALSQFMLDLHTEQHGYSENYVPYLVNQDTLYGTGQLPKFAGDLFHTRPLEEEADTSNYALIPTAEVPLTNLVRGEIIDEDDLPIKMTAHTPCFRSEAGSYGRDTRGLIRMHQFDKVEMVQIVRPEDSMAALEEMTGHAEKVLQLLGLPYRKIILCTGDMGFGACKTYDLEVWIPAQNTYREISSCSNVWDFQARRMQARCRSKSDKKTRLVHTLNGSGLAVGRTLVAVMENYQQADGRIEVPEVLRPYMNGLEYIG</sequence>
<name>SYS_ECO27</name>
<evidence type="ECO:0000255" key="1">
    <source>
        <dbReference type="HAMAP-Rule" id="MF_00176"/>
    </source>
</evidence>
<keyword id="KW-0030">Aminoacyl-tRNA synthetase</keyword>
<keyword id="KW-0067">ATP-binding</keyword>
<keyword id="KW-0963">Cytoplasm</keyword>
<keyword id="KW-0436">Ligase</keyword>
<keyword id="KW-0547">Nucleotide-binding</keyword>
<keyword id="KW-0648">Protein biosynthesis</keyword>
<keyword id="KW-1185">Reference proteome</keyword>
<protein>
    <recommendedName>
        <fullName evidence="1">Serine--tRNA ligase</fullName>
        <ecNumber evidence="1">6.1.1.11</ecNumber>
    </recommendedName>
    <alternativeName>
        <fullName evidence="1">Seryl-tRNA synthetase</fullName>
        <shortName evidence="1">SerRS</shortName>
    </alternativeName>
    <alternativeName>
        <fullName evidence="1">Seryl-tRNA(Ser/Sec) synthetase</fullName>
    </alternativeName>
</protein>
<comment type="function">
    <text evidence="1">Catalyzes the attachment of serine to tRNA(Ser). Is also able to aminoacylate tRNA(Sec) with serine, to form the misacylated tRNA L-seryl-tRNA(Sec), which will be further converted into selenocysteinyl-tRNA(Sec).</text>
</comment>
<comment type="catalytic activity">
    <reaction evidence="1">
        <text>tRNA(Ser) + L-serine + ATP = L-seryl-tRNA(Ser) + AMP + diphosphate + H(+)</text>
        <dbReference type="Rhea" id="RHEA:12292"/>
        <dbReference type="Rhea" id="RHEA-COMP:9669"/>
        <dbReference type="Rhea" id="RHEA-COMP:9703"/>
        <dbReference type="ChEBI" id="CHEBI:15378"/>
        <dbReference type="ChEBI" id="CHEBI:30616"/>
        <dbReference type="ChEBI" id="CHEBI:33019"/>
        <dbReference type="ChEBI" id="CHEBI:33384"/>
        <dbReference type="ChEBI" id="CHEBI:78442"/>
        <dbReference type="ChEBI" id="CHEBI:78533"/>
        <dbReference type="ChEBI" id="CHEBI:456215"/>
        <dbReference type="EC" id="6.1.1.11"/>
    </reaction>
</comment>
<comment type="catalytic activity">
    <reaction evidence="1">
        <text>tRNA(Sec) + L-serine + ATP = L-seryl-tRNA(Sec) + AMP + diphosphate + H(+)</text>
        <dbReference type="Rhea" id="RHEA:42580"/>
        <dbReference type="Rhea" id="RHEA-COMP:9742"/>
        <dbReference type="Rhea" id="RHEA-COMP:10128"/>
        <dbReference type="ChEBI" id="CHEBI:15378"/>
        <dbReference type="ChEBI" id="CHEBI:30616"/>
        <dbReference type="ChEBI" id="CHEBI:33019"/>
        <dbReference type="ChEBI" id="CHEBI:33384"/>
        <dbReference type="ChEBI" id="CHEBI:78442"/>
        <dbReference type="ChEBI" id="CHEBI:78533"/>
        <dbReference type="ChEBI" id="CHEBI:456215"/>
        <dbReference type="EC" id="6.1.1.11"/>
    </reaction>
</comment>
<comment type="pathway">
    <text evidence="1">Aminoacyl-tRNA biosynthesis; selenocysteinyl-tRNA(Sec) biosynthesis; L-seryl-tRNA(Sec) from L-serine and tRNA(Sec): step 1/1.</text>
</comment>
<comment type="subunit">
    <text evidence="1">Homodimer. The tRNA molecule binds across the dimer.</text>
</comment>
<comment type="subcellular location">
    <subcellularLocation>
        <location evidence="1">Cytoplasm</location>
    </subcellularLocation>
</comment>
<comment type="domain">
    <text evidence="1">Consists of two distinct domains, a catalytic core and a N-terminal extension that is involved in tRNA binding.</text>
</comment>
<comment type="similarity">
    <text evidence="1">Belongs to the class-II aminoacyl-tRNA synthetase family. Type-1 seryl-tRNA synthetase subfamily.</text>
</comment>